<evidence type="ECO:0000255" key="1">
    <source>
        <dbReference type="HAMAP-Rule" id="MF_00145"/>
    </source>
</evidence>
<keyword id="KW-0067">ATP-binding</keyword>
<keyword id="KW-0963">Cytoplasm</keyword>
<keyword id="KW-0324">Glycolysis</keyword>
<keyword id="KW-0418">Kinase</keyword>
<keyword id="KW-0547">Nucleotide-binding</keyword>
<keyword id="KW-1185">Reference proteome</keyword>
<keyword id="KW-0808">Transferase</keyword>
<organism>
    <name type="scientific">Porphyromonas gingivalis (strain ATCC BAA-308 / W83)</name>
    <dbReference type="NCBI Taxonomy" id="242619"/>
    <lineage>
        <taxon>Bacteria</taxon>
        <taxon>Pseudomonadati</taxon>
        <taxon>Bacteroidota</taxon>
        <taxon>Bacteroidia</taxon>
        <taxon>Bacteroidales</taxon>
        <taxon>Porphyromonadaceae</taxon>
        <taxon>Porphyromonas</taxon>
    </lineage>
</organism>
<reference key="1">
    <citation type="journal article" date="2003" name="J. Bacteriol.">
        <title>Complete genome sequence of the oral pathogenic bacterium Porphyromonas gingivalis strain W83.</title>
        <authorList>
            <person name="Nelson K.E."/>
            <person name="Fleischmann R.D."/>
            <person name="DeBoy R.T."/>
            <person name="Paulsen I.T."/>
            <person name="Fouts D.E."/>
            <person name="Eisen J.A."/>
            <person name="Daugherty S.C."/>
            <person name="Dodson R.J."/>
            <person name="Durkin A.S."/>
            <person name="Gwinn M.L."/>
            <person name="Haft D.H."/>
            <person name="Kolonay J.F."/>
            <person name="Nelson W.C."/>
            <person name="Mason T.M."/>
            <person name="Tallon L."/>
            <person name="Gray J."/>
            <person name="Granger D."/>
            <person name="Tettelin H."/>
            <person name="Dong H."/>
            <person name="Galvin J.L."/>
            <person name="Duncan M.J."/>
            <person name="Dewhirst F.E."/>
            <person name="Fraser C.M."/>
        </authorList>
    </citation>
    <scope>NUCLEOTIDE SEQUENCE [LARGE SCALE GENOMIC DNA]</scope>
    <source>
        <strain>ATCC BAA-308 / W83</strain>
    </source>
</reference>
<gene>
    <name evidence="1" type="primary">pgk</name>
    <name type="ordered locus">PG_1677</name>
</gene>
<sequence>MTIEQFNFAGKKAFVRVDFNVPLDDNFKITDDTRIRAALPTLRKIIADGGMTIIGSHLGRPKGVAPEFSLRHILPHVSELLGVDVLFADDCIGADAMDKAAKLKAGQVLLLENLRFYAEEEGKPRGLSDDASDEEKAAAKKAVKAAQKEFTQKLASMADCYVNDAFGTAHRAHASTALIADYFDRDHKMFGYLMEKEVKAVERVLHDIKRPFTAIMGGSKVSTKIEIIENLLNKVDNLILTGGMTYTFTKAAGGRIGLSIVEDDKLDLARDIVKKAAEKGVNLILSVDTKVADRFDNDAATQVCSNMEIPDDWMGMDIGPRSIEKFRKVILESKTILWNGPTGVFEFDNFSIGSKAVGEAIVEATANGAFSLVGGGDSVACVNKFGLADKVSYVSTGGGALLEAIEGKTLPGIAAIQG</sequence>
<protein>
    <recommendedName>
        <fullName evidence="1">Phosphoglycerate kinase</fullName>
        <ecNumber evidence="1">2.7.2.3</ecNumber>
    </recommendedName>
</protein>
<proteinExistence type="inferred from homology"/>
<comment type="catalytic activity">
    <reaction evidence="1">
        <text>(2R)-3-phosphoglycerate + ATP = (2R)-3-phospho-glyceroyl phosphate + ADP</text>
        <dbReference type="Rhea" id="RHEA:14801"/>
        <dbReference type="ChEBI" id="CHEBI:30616"/>
        <dbReference type="ChEBI" id="CHEBI:57604"/>
        <dbReference type="ChEBI" id="CHEBI:58272"/>
        <dbReference type="ChEBI" id="CHEBI:456216"/>
        <dbReference type="EC" id="2.7.2.3"/>
    </reaction>
</comment>
<comment type="pathway">
    <text evidence="1">Carbohydrate degradation; glycolysis; pyruvate from D-glyceraldehyde 3-phosphate: step 2/5.</text>
</comment>
<comment type="subunit">
    <text evidence="1">Monomer.</text>
</comment>
<comment type="subcellular location">
    <subcellularLocation>
        <location evidence="1">Cytoplasm</location>
    </subcellularLocation>
</comment>
<comment type="similarity">
    <text evidence="1">Belongs to the phosphoglycerate kinase family.</text>
</comment>
<dbReference type="EC" id="2.7.2.3" evidence="1"/>
<dbReference type="EMBL" id="AE015924">
    <property type="protein sequence ID" value="AAQ66694.1"/>
    <property type="molecule type" value="Genomic_DNA"/>
</dbReference>
<dbReference type="RefSeq" id="WP_005873486.1">
    <property type="nucleotide sequence ID" value="NC_002950.2"/>
</dbReference>
<dbReference type="SMR" id="Q7MU77"/>
<dbReference type="STRING" id="242619.PG_1677"/>
<dbReference type="EnsemblBacteria" id="AAQ66694">
    <property type="protein sequence ID" value="AAQ66694"/>
    <property type="gene ID" value="PG_1677"/>
</dbReference>
<dbReference type="KEGG" id="pgi:PG_1677"/>
<dbReference type="PATRIC" id="fig|242619.8.peg.1554"/>
<dbReference type="eggNOG" id="COG0126">
    <property type="taxonomic scope" value="Bacteria"/>
</dbReference>
<dbReference type="HOGENOM" id="CLU_025427_0_2_10"/>
<dbReference type="BioCyc" id="PGIN242619:G1G02-1567-MONOMER"/>
<dbReference type="UniPathway" id="UPA00109">
    <property type="reaction ID" value="UER00185"/>
</dbReference>
<dbReference type="Proteomes" id="UP000000588">
    <property type="component" value="Chromosome"/>
</dbReference>
<dbReference type="GO" id="GO:0005829">
    <property type="term" value="C:cytosol"/>
    <property type="evidence" value="ECO:0007669"/>
    <property type="project" value="TreeGrafter"/>
</dbReference>
<dbReference type="GO" id="GO:0043531">
    <property type="term" value="F:ADP binding"/>
    <property type="evidence" value="ECO:0007669"/>
    <property type="project" value="TreeGrafter"/>
</dbReference>
<dbReference type="GO" id="GO:0005524">
    <property type="term" value="F:ATP binding"/>
    <property type="evidence" value="ECO:0007669"/>
    <property type="project" value="UniProtKB-KW"/>
</dbReference>
<dbReference type="GO" id="GO:0004618">
    <property type="term" value="F:phosphoglycerate kinase activity"/>
    <property type="evidence" value="ECO:0007669"/>
    <property type="project" value="UniProtKB-UniRule"/>
</dbReference>
<dbReference type="GO" id="GO:0006094">
    <property type="term" value="P:gluconeogenesis"/>
    <property type="evidence" value="ECO:0007669"/>
    <property type="project" value="TreeGrafter"/>
</dbReference>
<dbReference type="GO" id="GO:0006096">
    <property type="term" value="P:glycolytic process"/>
    <property type="evidence" value="ECO:0007669"/>
    <property type="project" value="UniProtKB-UniRule"/>
</dbReference>
<dbReference type="CDD" id="cd00318">
    <property type="entry name" value="Phosphoglycerate_kinase"/>
    <property type="match status" value="1"/>
</dbReference>
<dbReference type="FunFam" id="3.40.50.1260:FF:000003">
    <property type="entry name" value="Phosphoglycerate kinase"/>
    <property type="match status" value="1"/>
</dbReference>
<dbReference type="FunFam" id="3.40.50.1260:FF:000009">
    <property type="entry name" value="Phosphoglycerate kinase"/>
    <property type="match status" value="1"/>
</dbReference>
<dbReference type="FunFam" id="3.40.50.1260:FF:000010">
    <property type="entry name" value="Phosphoglycerate kinase"/>
    <property type="match status" value="1"/>
</dbReference>
<dbReference type="Gene3D" id="3.40.50.1260">
    <property type="entry name" value="Phosphoglycerate kinase, N-terminal domain"/>
    <property type="match status" value="2"/>
</dbReference>
<dbReference type="HAMAP" id="MF_00145">
    <property type="entry name" value="Phosphoglyc_kinase"/>
    <property type="match status" value="1"/>
</dbReference>
<dbReference type="InterPro" id="IPR001576">
    <property type="entry name" value="Phosphoglycerate_kinase"/>
</dbReference>
<dbReference type="InterPro" id="IPR015824">
    <property type="entry name" value="Phosphoglycerate_kinase_N"/>
</dbReference>
<dbReference type="InterPro" id="IPR036043">
    <property type="entry name" value="Phosphoglycerate_kinase_sf"/>
</dbReference>
<dbReference type="PANTHER" id="PTHR11406">
    <property type="entry name" value="PHOSPHOGLYCERATE KINASE"/>
    <property type="match status" value="1"/>
</dbReference>
<dbReference type="PANTHER" id="PTHR11406:SF23">
    <property type="entry name" value="PHOSPHOGLYCERATE KINASE 1, CHLOROPLASTIC-RELATED"/>
    <property type="match status" value="1"/>
</dbReference>
<dbReference type="Pfam" id="PF00162">
    <property type="entry name" value="PGK"/>
    <property type="match status" value="1"/>
</dbReference>
<dbReference type="PIRSF" id="PIRSF000724">
    <property type="entry name" value="Pgk"/>
    <property type="match status" value="1"/>
</dbReference>
<dbReference type="PRINTS" id="PR00477">
    <property type="entry name" value="PHGLYCKINASE"/>
</dbReference>
<dbReference type="SUPFAM" id="SSF53748">
    <property type="entry name" value="Phosphoglycerate kinase"/>
    <property type="match status" value="1"/>
</dbReference>
<accession>Q7MU77</accession>
<feature type="chain" id="PRO_0000145984" description="Phosphoglycerate kinase">
    <location>
        <begin position="1"/>
        <end position="418"/>
    </location>
</feature>
<feature type="binding site" evidence="1">
    <location>
        <begin position="18"/>
        <end position="20"/>
    </location>
    <ligand>
        <name>substrate</name>
    </ligand>
</feature>
<feature type="binding site" evidence="1">
    <location>
        <position position="34"/>
    </location>
    <ligand>
        <name>substrate</name>
    </ligand>
</feature>
<feature type="binding site" evidence="1">
    <location>
        <begin position="57"/>
        <end position="60"/>
    </location>
    <ligand>
        <name>substrate</name>
    </ligand>
</feature>
<feature type="binding site" evidence="1">
    <location>
        <position position="115"/>
    </location>
    <ligand>
        <name>substrate</name>
    </ligand>
</feature>
<feature type="binding site" evidence="1">
    <location>
        <position position="171"/>
    </location>
    <ligand>
        <name>substrate</name>
    </ligand>
</feature>
<feature type="binding site" evidence="1">
    <location>
        <position position="224"/>
    </location>
    <ligand>
        <name>ATP</name>
        <dbReference type="ChEBI" id="CHEBI:30616"/>
    </ligand>
</feature>
<feature type="binding site" evidence="1">
    <location>
        <position position="315"/>
    </location>
    <ligand>
        <name>ATP</name>
        <dbReference type="ChEBI" id="CHEBI:30616"/>
    </ligand>
</feature>
<feature type="binding site" evidence="1">
    <location>
        <position position="346"/>
    </location>
    <ligand>
        <name>ATP</name>
        <dbReference type="ChEBI" id="CHEBI:30616"/>
    </ligand>
</feature>
<feature type="binding site" evidence="1">
    <location>
        <begin position="375"/>
        <end position="378"/>
    </location>
    <ligand>
        <name>ATP</name>
        <dbReference type="ChEBI" id="CHEBI:30616"/>
    </ligand>
</feature>
<name>PGK_PORGI</name>